<proteinExistence type="inferred from homology"/>
<accession>Q31HH3</accession>
<name>TRPA_HYDCU</name>
<sequence>MSRIDATLSALKSEKKTALIPYITAGDPHPDMTVNLMHSLVEQGADMIELGVPFSDPMADGPVIQKAVERALEHNVSLKNVLAYVTEFRKKDAQTPVILMGYLNPIEAMGSDVFAKAAAEAGVDAVLTVDMPPEESEGYFQDLSLAQLDRIFLVSPTTPDGRLNAVSEKGSGFVYYVSLKGVTGSKALDVDDVAQHVGHLREKMSMPVAIGFGIRDGNTAYEMAKLGDAIIVGSALVSLIEQNASEDSAVIQQVLSDKMREFRQAIDKADNE</sequence>
<feature type="chain" id="PRO_1000018302" description="Tryptophan synthase alpha chain">
    <location>
        <begin position="1"/>
        <end position="272"/>
    </location>
</feature>
<feature type="active site" description="Proton acceptor" evidence="1">
    <location>
        <position position="49"/>
    </location>
</feature>
<feature type="active site" description="Proton acceptor" evidence="1">
    <location>
        <position position="60"/>
    </location>
</feature>
<dbReference type="EC" id="4.2.1.20" evidence="1"/>
<dbReference type="EMBL" id="CP000109">
    <property type="protein sequence ID" value="ABB41400.1"/>
    <property type="molecule type" value="Genomic_DNA"/>
</dbReference>
<dbReference type="SMR" id="Q31HH3"/>
<dbReference type="STRING" id="317025.Tcr_0804"/>
<dbReference type="KEGG" id="tcx:Tcr_0804"/>
<dbReference type="eggNOG" id="COG0159">
    <property type="taxonomic scope" value="Bacteria"/>
</dbReference>
<dbReference type="HOGENOM" id="CLU_016734_0_0_6"/>
<dbReference type="OrthoDB" id="9804578at2"/>
<dbReference type="UniPathway" id="UPA00035">
    <property type="reaction ID" value="UER00044"/>
</dbReference>
<dbReference type="GO" id="GO:0005829">
    <property type="term" value="C:cytosol"/>
    <property type="evidence" value="ECO:0007669"/>
    <property type="project" value="TreeGrafter"/>
</dbReference>
<dbReference type="GO" id="GO:0004834">
    <property type="term" value="F:tryptophan synthase activity"/>
    <property type="evidence" value="ECO:0007669"/>
    <property type="project" value="UniProtKB-UniRule"/>
</dbReference>
<dbReference type="CDD" id="cd04724">
    <property type="entry name" value="Tryptophan_synthase_alpha"/>
    <property type="match status" value="1"/>
</dbReference>
<dbReference type="FunFam" id="3.20.20.70:FF:000037">
    <property type="entry name" value="Tryptophan synthase alpha chain"/>
    <property type="match status" value="1"/>
</dbReference>
<dbReference type="Gene3D" id="3.20.20.70">
    <property type="entry name" value="Aldolase class I"/>
    <property type="match status" value="1"/>
</dbReference>
<dbReference type="HAMAP" id="MF_00131">
    <property type="entry name" value="Trp_synth_alpha"/>
    <property type="match status" value="1"/>
</dbReference>
<dbReference type="InterPro" id="IPR013785">
    <property type="entry name" value="Aldolase_TIM"/>
</dbReference>
<dbReference type="InterPro" id="IPR011060">
    <property type="entry name" value="RibuloseP-bd_barrel"/>
</dbReference>
<dbReference type="InterPro" id="IPR018204">
    <property type="entry name" value="Trp_synthase_alpha_AS"/>
</dbReference>
<dbReference type="InterPro" id="IPR002028">
    <property type="entry name" value="Trp_synthase_suA"/>
</dbReference>
<dbReference type="NCBIfam" id="TIGR00262">
    <property type="entry name" value="trpA"/>
    <property type="match status" value="1"/>
</dbReference>
<dbReference type="PANTHER" id="PTHR43406:SF1">
    <property type="entry name" value="TRYPTOPHAN SYNTHASE ALPHA CHAIN, CHLOROPLASTIC"/>
    <property type="match status" value="1"/>
</dbReference>
<dbReference type="PANTHER" id="PTHR43406">
    <property type="entry name" value="TRYPTOPHAN SYNTHASE, ALPHA CHAIN"/>
    <property type="match status" value="1"/>
</dbReference>
<dbReference type="Pfam" id="PF00290">
    <property type="entry name" value="Trp_syntA"/>
    <property type="match status" value="1"/>
</dbReference>
<dbReference type="SUPFAM" id="SSF51366">
    <property type="entry name" value="Ribulose-phoshate binding barrel"/>
    <property type="match status" value="1"/>
</dbReference>
<dbReference type="PROSITE" id="PS00167">
    <property type="entry name" value="TRP_SYNTHASE_ALPHA"/>
    <property type="match status" value="1"/>
</dbReference>
<protein>
    <recommendedName>
        <fullName evidence="1">Tryptophan synthase alpha chain</fullName>
        <ecNumber evidence="1">4.2.1.20</ecNumber>
    </recommendedName>
</protein>
<keyword id="KW-0028">Amino-acid biosynthesis</keyword>
<keyword id="KW-0057">Aromatic amino acid biosynthesis</keyword>
<keyword id="KW-0456">Lyase</keyword>
<keyword id="KW-0822">Tryptophan biosynthesis</keyword>
<organism>
    <name type="scientific">Hydrogenovibrio crunogenus (strain DSM 25203 / XCL-2)</name>
    <name type="common">Thiomicrospira crunogena</name>
    <dbReference type="NCBI Taxonomy" id="317025"/>
    <lineage>
        <taxon>Bacteria</taxon>
        <taxon>Pseudomonadati</taxon>
        <taxon>Pseudomonadota</taxon>
        <taxon>Gammaproteobacteria</taxon>
        <taxon>Thiotrichales</taxon>
        <taxon>Piscirickettsiaceae</taxon>
        <taxon>Hydrogenovibrio</taxon>
    </lineage>
</organism>
<evidence type="ECO:0000255" key="1">
    <source>
        <dbReference type="HAMAP-Rule" id="MF_00131"/>
    </source>
</evidence>
<gene>
    <name evidence="1" type="primary">trpA</name>
    <name type="ordered locus">Tcr_0804</name>
</gene>
<reference key="1">
    <citation type="journal article" date="2006" name="PLoS Biol.">
        <title>The genome of deep-sea vent chemolithoautotroph Thiomicrospira crunogena XCL-2.</title>
        <authorList>
            <person name="Scott K.M."/>
            <person name="Sievert S.M."/>
            <person name="Abril F.N."/>
            <person name="Ball L.A."/>
            <person name="Barrett C.J."/>
            <person name="Blake R.A."/>
            <person name="Boller A.J."/>
            <person name="Chain P.S.G."/>
            <person name="Clark J.A."/>
            <person name="Davis C.R."/>
            <person name="Detter C."/>
            <person name="Do K.F."/>
            <person name="Dobrinski K.P."/>
            <person name="Faza B.I."/>
            <person name="Fitzpatrick K.A."/>
            <person name="Freyermuth S.K."/>
            <person name="Harmer T.L."/>
            <person name="Hauser L.J."/>
            <person name="Huegler M."/>
            <person name="Kerfeld C.A."/>
            <person name="Klotz M.G."/>
            <person name="Kong W.W."/>
            <person name="Land M."/>
            <person name="Lapidus A."/>
            <person name="Larimer F.W."/>
            <person name="Longo D.L."/>
            <person name="Lucas S."/>
            <person name="Malfatti S.A."/>
            <person name="Massey S.E."/>
            <person name="Martin D.D."/>
            <person name="McCuddin Z."/>
            <person name="Meyer F."/>
            <person name="Moore J.L."/>
            <person name="Ocampo L.H. Jr."/>
            <person name="Paul J.H."/>
            <person name="Paulsen I.T."/>
            <person name="Reep D.K."/>
            <person name="Ren Q."/>
            <person name="Ross R.L."/>
            <person name="Sato P.Y."/>
            <person name="Thomas P."/>
            <person name="Tinkham L.E."/>
            <person name="Zeruth G.T."/>
        </authorList>
    </citation>
    <scope>NUCLEOTIDE SEQUENCE [LARGE SCALE GENOMIC DNA]</scope>
    <source>
        <strain>DSM 25203 / XCL-2</strain>
    </source>
</reference>
<comment type="function">
    <text evidence="1">The alpha subunit is responsible for the aldol cleavage of indoleglycerol phosphate to indole and glyceraldehyde 3-phosphate.</text>
</comment>
<comment type="catalytic activity">
    <reaction evidence="1">
        <text>(1S,2R)-1-C-(indol-3-yl)glycerol 3-phosphate + L-serine = D-glyceraldehyde 3-phosphate + L-tryptophan + H2O</text>
        <dbReference type="Rhea" id="RHEA:10532"/>
        <dbReference type="ChEBI" id="CHEBI:15377"/>
        <dbReference type="ChEBI" id="CHEBI:33384"/>
        <dbReference type="ChEBI" id="CHEBI:57912"/>
        <dbReference type="ChEBI" id="CHEBI:58866"/>
        <dbReference type="ChEBI" id="CHEBI:59776"/>
        <dbReference type="EC" id="4.2.1.20"/>
    </reaction>
</comment>
<comment type="pathway">
    <text evidence="1">Amino-acid biosynthesis; L-tryptophan biosynthesis; L-tryptophan from chorismate: step 5/5.</text>
</comment>
<comment type="subunit">
    <text evidence="1">Tetramer of two alpha and two beta chains.</text>
</comment>
<comment type="similarity">
    <text evidence="1">Belongs to the TrpA family.</text>
</comment>